<keyword id="KW-0131">Cell cycle</keyword>
<keyword id="KW-0132">Cell division</keyword>
<keyword id="KW-1003">Cell membrane</keyword>
<keyword id="KW-0133">Cell shape</keyword>
<keyword id="KW-0961">Cell wall biogenesis/degradation</keyword>
<keyword id="KW-0460">Magnesium</keyword>
<keyword id="KW-0472">Membrane</keyword>
<keyword id="KW-0479">Metal-binding</keyword>
<keyword id="KW-0573">Peptidoglycan synthesis</keyword>
<keyword id="KW-0808">Transferase</keyword>
<keyword id="KW-0812">Transmembrane</keyword>
<keyword id="KW-1133">Transmembrane helix</keyword>
<feature type="chain" id="PRO_0000108824" description="Phospho-N-acetylmuramoyl-pentapeptide-transferase">
    <location>
        <begin position="1"/>
        <end position="321"/>
    </location>
</feature>
<feature type="transmembrane region" description="Helical" evidence="1">
    <location>
        <begin position="6"/>
        <end position="26"/>
    </location>
</feature>
<feature type="transmembrane region" description="Helical" evidence="1">
    <location>
        <begin position="50"/>
        <end position="70"/>
    </location>
</feature>
<feature type="transmembrane region" description="Helical" evidence="1">
    <location>
        <begin position="82"/>
        <end position="102"/>
    </location>
</feature>
<feature type="transmembrane region" description="Helical" evidence="1">
    <location>
        <begin position="118"/>
        <end position="138"/>
    </location>
</feature>
<feature type="transmembrane region" description="Helical" evidence="1">
    <location>
        <begin position="143"/>
        <end position="163"/>
    </location>
</feature>
<feature type="transmembrane region" description="Helical" evidence="1">
    <location>
        <begin position="175"/>
        <end position="195"/>
    </location>
</feature>
<feature type="transmembrane region" description="Helical" evidence="1">
    <location>
        <begin position="200"/>
        <end position="220"/>
    </location>
</feature>
<feature type="transmembrane region" description="Helical" evidence="1">
    <location>
        <begin position="226"/>
        <end position="246"/>
    </location>
</feature>
<feature type="transmembrane region" description="Helical" evidence="1">
    <location>
        <begin position="251"/>
        <end position="271"/>
    </location>
</feature>
<feature type="transmembrane region" description="Helical" evidence="1">
    <location>
        <begin position="301"/>
        <end position="321"/>
    </location>
</feature>
<accession>O07668</accession>
<gene>
    <name evidence="1" type="primary">mraY</name>
</gene>
<name>MRAY_ENTHR</name>
<protein>
    <recommendedName>
        <fullName evidence="1">Phospho-N-acetylmuramoyl-pentapeptide-transferase</fullName>
        <ecNumber evidence="1">2.7.8.13</ecNumber>
    </recommendedName>
    <alternativeName>
        <fullName evidence="1">UDP-MurNAc-pentapeptide phosphotransferase</fullName>
    </alternativeName>
</protein>
<dbReference type="EC" id="2.7.8.13" evidence="1"/>
<dbReference type="EMBL" id="Y13922">
    <property type="protein sequence ID" value="CAA74233.1"/>
    <property type="molecule type" value="Genomic_DNA"/>
</dbReference>
<dbReference type="SMR" id="O07668"/>
<dbReference type="STRING" id="1354.A6P53_03395"/>
<dbReference type="UniPathway" id="UPA00219"/>
<dbReference type="GO" id="GO:0005886">
    <property type="term" value="C:plasma membrane"/>
    <property type="evidence" value="ECO:0007669"/>
    <property type="project" value="UniProtKB-SubCell"/>
</dbReference>
<dbReference type="GO" id="GO:0046872">
    <property type="term" value="F:metal ion binding"/>
    <property type="evidence" value="ECO:0007669"/>
    <property type="project" value="UniProtKB-KW"/>
</dbReference>
<dbReference type="GO" id="GO:0008963">
    <property type="term" value="F:phospho-N-acetylmuramoyl-pentapeptide-transferase activity"/>
    <property type="evidence" value="ECO:0007669"/>
    <property type="project" value="UniProtKB-UniRule"/>
</dbReference>
<dbReference type="GO" id="GO:0051301">
    <property type="term" value="P:cell division"/>
    <property type="evidence" value="ECO:0007669"/>
    <property type="project" value="UniProtKB-KW"/>
</dbReference>
<dbReference type="GO" id="GO:0071555">
    <property type="term" value="P:cell wall organization"/>
    <property type="evidence" value="ECO:0007669"/>
    <property type="project" value="UniProtKB-KW"/>
</dbReference>
<dbReference type="GO" id="GO:0009252">
    <property type="term" value="P:peptidoglycan biosynthetic process"/>
    <property type="evidence" value="ECO:0007669"/>
    <property type="project" value="UniProtKB-UniRule"/>
</dbReference>
<dbReference type="GO" id="GO:0008360">
    <property type="term" value="P:regulation of cell shape"/>
    <property type="evidence" value="ECO:0007669"/>
    <property type="project" value="UniProtKB-KW"/>
</dbReference>
<dbReference type="CDD" id="cd06852">
    <property type="entry name" value="GT_MraY"/>
    <property type="match status" value="1"/>
</dbReference>
<dbReference type="HAMAP" id="MF_00038">
    <property type="entry name" value="MraY"/>
    <property type="match status" value="1"/>
</dbReference>
<dbReference type="InterPro" id="IPR000715">
    <property type="entry name" value="Glycosyl_transferase_4"/>
</dbReference>
<dbReference type="InterPro" id="IPR003524">
    <property type="entry name" value="PNAcMuramoyl-5peptid_Trfase"/>
</dbReference>
<dbReference type="InterPro" id="IPR018480">
    <property type="entry name" value="PNAcMuramoyl-5peptid_Trfase_CS"/>
</dbReference>
<dbReference type="NCBIfam" id="TIGR00445">
    <property type="entry name" value="mraY"/>
    <property type="match status" value="1"/>
</dbReference>
<dbReference type="PANTHER" id="PTHR22926">
    <property type="entry name" value="PHOSPHO-N-ACETYLMURAMOYL-PENTAPEPTIDE-TRANSFERASE"/>
    <property type="match status" value="1"/>
</dbReference>
<dbReference type="PANTHER" id="PTHR22926:SF5">
    <property type="entry name" value="PHOSPHO-N-ACETYLMURAMOYL-PENTAPEPTIDE-TRANSFERASE HOMOLOG"/>
    <property type="match status" value="1"/>
</dbReference>
<dbReference type="Pfam" id="PF00953">
    <property type="entry name" value="Glycos_transf_4"/>
    <property type="match status" value="1"/>
</dbReference>
<dbReference type="Pfam" id="PF10555">
    <property type="entry name" value="MraY_sig1"/>
    <property type="match status" value="1"/>
</dbReference>
<dbReference type="PROSITE" id="PS01347">
    <property type="entry name" value="MRAY_1"/>
    <property type="match status" value="1"/>
</dbReference>
<dbReference type="PROSITE" id="PS01348">
    <property type="entry name" value="MRAY_2"/>
    <property type="match status" value="1"/>
</dbReference>
<sequence length="321" mass="35717">MEWTQALIPIVSSCAMTIAAMPLFIGYFQMKKQGQAIREEGPKWHNVKAGTPTMGGLVFLVAAILTGIWVGRPWQNQSTPTLFILLFVLALYGVIGFLDDFIKIFKKRNMGLNSKQKLLGQIIGGIIFYLVYRSEGYPGTLNFFGIELPLGLFYGVFAIFWLVGFSNAVNLTDGIDGLVAGLGTISFATYGIIAWHQQQYDVLVICLSVLGGLLGFFAYNRKPAKIFMGDVGSLALGGLLAAISIMLNQEWTLLLVGLIYVMETASVMLQVTSFKLTGKRIFKMSPIHHHFGMCGWSEWKIDIIFWLVSIVTSLITLWFIW</sequence>
<reference key="1">
    <citation type="journal article" date="1998" name="DNA Seq.">
        <title>The division and cell wall gene cluster of Enterococcus hirae S185.</title>
        <authorList>
            <person name="Duez C."/>
            <person name="Thamm I."/>
            <person name="Sapunaric F."/>
            <person name="Coyette J."/>
            <person name="Ghuysen J.-M."/>
        </authorList>
    </citation>
    <scope>NUCLEOTIDE SEQUENCE [GENOMIC DNA]</scope>
    <source>
        <strain>S185</strain>
    </source>
</reference>
<proteinExistence type="inferred from homology"/>
<organism>
    <name type="scientific">Enterococcus hirae</name>
    <dbReference type="NCBI Taxonomy" id="1354"/>
    <lineage>
        <taxon>Bacteria</taxon>
        <taxon>Bacillati</taxon>
        <taxon>Bacillota</taxon>
        <taxon>Bacilli</taxon>
        <taxon>Lactobacillales</taxon>
        <taxon>Enterococcaceae</taxon>
        <taxon>Enterococcus</taxon>
    </lineage>
</organism>
<comment type="function">
    <text evidence="1">Catalyzes the initial step of the lipid cycle reactions in the biosynthesis of the cell wall peptidoglycan: transfers peptidoglycan precursor phospho-MurNAc-pentapeptide from UDP-MurNAc-pentapeptide onto the lipid carrier undecaprenyl phosphate, yielding undecaprenyl-pyrophosphoryl-MurNAc-pentapeptide, known as lipid I.</text>
</comment>
<comment type="catalytic activity">
    <reaction evidence="1">
        <text>UDP-N-acetyl-alpha-D-muramoyl-L-alanyl-gamma-D-glutamyl-L-lysyl-D-alanyl-D-alanine + di-trans,octa-cis-undecaprenyl phosphate = Mur2Ac(oyl-L-Ala-gamma-D-Glu-L-Lys-D-Ala-D-Ala)-di-trans,octa-cis-undecaprenyl diphosphate + UMP</text>
        <dbReference type="Rhea" id="RHEA:21920"/>
        <dbReference type="ChEBI" id="CHEBI:57865"/>
        <dbReference type="ChEBI" id="CHEBI:60032"/>
        <dbReference type="ChEBI" id="CHEBI:60392"/>
        <dbReference type="ChEBI" id="CHEBI:70758"/>
        <dbReference type="EC" id="2.7.8.13"/>
    </reaction>
</comment>
<comment type="cofactor">
    <cofactor evidence="1">
        <name>Mg(2+)</name>
        <dbReference type="ChEBI" id="CHEBI:18420"/>
    </cofactor>
</comment>
<comment type="pathway">
    <text evidence="1">Cell wall biogenesis; peptidoglycan biosynthesis.</text>
</comment>
<comment type="subcellular location">
    <subcellularLocation>
        <location evidence="1">Cell membrane</location>
        <topology evidence="1">Multi-pass membrane protein</topology>
    </subcellularLocation>
</comment>
<comment type="similarity">
    <text evidence="1 2">Belongs to the glycosyltransferase 4 family. MraY subfamily.</text>
</comment>
<evidence type="ECO:0000255" key="1">
    <source>
        <dbReference type="HAMAP-Rule" id="MF_00038"/>
    </source>
</evidence>
<evidence type="ECO:0000305" key="2"/>